<reference key="1">
    <citation type="journal article" date="2002" name="Nature">
        <title>The genome sequence of Schizosaccharomyces pombe.</title>
        <authorList>
            <person name="Wood V."/>
            <person name="Gwilliam R."/>
            <person name="Rajandream M.A."/>
            <person name="Lyne M.H."/>
            <person name="Lyne R."/>
            <person name="Stewart A."/>
            <person name="Sgouros J.G."/>
            <person name="Peat N."/>
            <person name="Hayles J."/>
            <person name="Baker S.G."/>
            <person name="Basham D."/>
            <person name="Bowman S."/>
            <person name="Brooks K."/>
            <person name="Brown D."/>
            <person name="Brown S."/>
            <person name="Chillingworth T."/>
            <person name="Churcher C.M."/>
            <person name="Collins M."/>
            <person name="Connor R."/>
            <person name="Cronin A."/>
            <person name="Davis P."/>
            <person name="Feltwell T."/>
            <person name="Fraser A."/>
            <person name="Gentles S."/>
            <person name="Goble A."/>
            <person name="Hamlin N."/>
            <person name="Harris D.E."/>
            <person name="Hidalgo J."/>
            <person name="Hodgson G."/>
            <person name="Holroyd S."/>
            <person name="Hornsby T."/>
            <person name="Howarth S."/>
            <person name="Huckle E.J."/>
            <person name="Hunt S."/>
            <person name="Jagels K."/>
            <person name="James K.D."/>
            <person name="Jones L."/>
            <person name="Jones M."/>
            <person name="Leather S."/>
            <person name="McDonald S."/>
            <person name="McLean J."/>
            <person name="Mooney P."/>
            <person name="Moule S."/>
            <person name="Mungall K.L."/>
            <person name="Murphy L.D."/>
            <person name="Niblett D."/>
            <person name="Odell C."/>
            <person name="Oliver K."/>
            <person name="O'Neil S."/>
            <person name="Pearson D."/>
            <person name="Quail M.A."/>
            <person name="Rabbinowitsch E."/>
            <person name="Rutherford K.M."/>
            <person name="Rutter S."/>
            <person name="Saunders D."/>
            <person name="Seeger K."/>
            <person name="Sharp S."/>
            <person name="Skelton J."/>
            <person name="Simmonds M.N."/>
            <person name="Squares R."/>
            <person name="Squares S."/>
            <person name="Stevens K."/>
            <person name="Taylor K."/>
            <person name="Taylor R.G."/>
            <person name="Tivey A."/>
            <person name="Walsh S.V."/>
            <person name="Warren T."/>
            <person name="Whitehead S."/>
            <person name="Woodward J.R."/>
            <person name="Volckaert G."/>
            <person name="Aert R."/>
            <person name="Robben J."/>
            <person name="Grymonprez B."/>
            <person name="Weltjens I."/>
            <person name="Vanstreels E."/>
            <person name="Rieger M."/>
            <person name="Schaefer M."/>
            <person name="Mueller-Auer S."/>
            <person name="Gabel C."/>
            <person name="Fuchs M."/>
            <person name="Duesterhoeft A."/>
            <person name="Fritzc C."/>
            <person name="Holzer E."/>
            <person name="Moestl D."/>
            <person name="Hilbert H."/>
            <person name="Borzym K."/>
            <person name="Langer I."/>
            <person name="Beck A."/>
            <person name="Lehrach H."/>
            <person name="Reinhardt R."/>
            <person name="Pohl T.M."/>
            <person name="Eger P."/>
            <person name="Zimmermann W."/>
            <person name="Wedler H."/>
            <person name="Wambutt R."/>
            <person name="Purnelle B."/>
            <person name="Goffeau A."/>
            <person name="Cadieu E."/>
            <person name="Dreano S."/>
            <person name="Gloux S."/>
            <person name="Lelaure V."/>
            <person name="Mottier S."/>
            <person name="Galibert F."/>
            <person name="Aves S.J."/>
            <person name="Xiang Z."/>
            <person name="Hunt C."/>
            <person name="Moore K."/>
            <person name="Hurst S.M."/>
            <person name="Lucas M."/>
            <person name="Rochet M."/>
            <person name="Gaillardin C."/>
            <person name="Tallada V.A."/>
            <person name="Garzon A."/>
            <person name="Thode G."/>
            <person name="Daga R.R."/>
            <person name="Cruzado L."/>
            <person name="Jimenez J."/>
            <person name="Sanchez M."/>
            <person name="del Rey F."/>
            <person name="Benito J."/>
            <person name="Dominguez A."/>
            <person name="Revuelta J.L."/>
            <person name="Moreno S."/>
            <person name="Armstrong J."/>
            <person name="Forsburg S.L."/>
            <person name="Cerutti L."/>
            <person name="Lowe T."/>
            <person name="McCombie W.R."/>
            <person name="Paulsen I."/>
            <person name="Potashkin J."/>
            <person name="Shpakovski G.V."/>
            <person name="Ussery D."/>
            <person name="Barrell B.G."/>
            <person name="Nurse P."/>
        </authorList>
    </citation>
    <scope>NUCLEOTIDE SEQUENCE [LARGE SCALE GENOMIC DNA]</scope>
    <source>
        <strain>972 / ATCC 24843</strain>
    </source>
</reference>
<reference key="2">
    <citation type="journal article" date="2006" name="Nat. Biotechnol.">
        <title>ORFeome cloning and global analysis of protein localization in the fission yeast Schizosaccharomyces pombe.</title>
        <authorList>
            <person name="Matsuyama A."/>
            <person name="Arai R."/>
            <person name="Yashiroda Y."/>
            <person name="Shirai A."/>
            <person name="Kamata A."/>
            <person name="Sekido S."/>
            <person name="Kobayashi Y."/>
            <person name="Hashimoto A."/>
            <person name="Hamamoto M."/>
            <person name="Hiraoka Y."/>
            <person name="Horinouchi S."/>
            <person name="Yoshida M."/>
        </authorList>
    </citation>
    <scope>SUBCELLULAR LOCATION [LARGE SCALE ANALYSIS]</scope>
</reference>
<sequence length="355" mass="40100">MNPTTKRAIKEIVVYALAFGCSWYAAHKLLSTLDPYRQKRQDTVSKSRKRLDEWAGEQVKELETLELNEYEQIVASQLVLPSEIDVSFDDIGGMDEHVNQLLQDVLFPLKYPEVFDTHGGLLSCPKGLLLYGPPGCGKTMLAKALAKQSQATFINVSVGLLTDKWFGESNKLVDALFTLARKLEPTIIFIDEIDTFLRQRQRTDHEAMAQIKAEFMSMWDGLLSGQSRVLVLGATNRPADIDEAIRRRMPKVFSIPLPNAEQRRKILELYLKKVPLEANFDWNGVVNATAGLSGSYIKEVCRSALSVPRRELFDKHGNDLEAIKYDIQSGGLRSLKTEDFYHYESLQNVSGIDVE</sequence>
<feature type="chain" id="PRO_0000310284" description="Uncharacterized AAA domain-containing protein C24B10.10c">
    <location>
        <begin position="1"/>
        <end position="355"/>
    </location>
</feature>
<feature type="binding site" evidence="1">
    <location>
        <begin position="132"/>
        <end position="139"/>
    </location>
    <ligand>
        <name>ATP</name>
        <dbReference type="ChEBI" id="CHEBI:30616"/>
    </ligand>
</feature>
<organism>
    <name type="scientific">Schizosaccharomyces pombe (strain 972 / ATCC 24843)</name>
    <name type="common">Fission yeast</name>
    <dbReference type="NCBI Taxonomy" id="284812"/>
    <lineage>
        <taxon>Eukaryota</taxon>
        <taxon>Fungi</taxon>
        <taxon>Dikarya</taxon>
        <taxon>Ascomycota</taxon>
        <taxon>Taphrinomycotina</taxon>
        <taxon>Schizosaccharomycetes</taxon>
        <taxon>Schizosaccharomycetales</taxon>
        <taxon>Schizosaccharomycetaceae</taxon>
        <taxon>Schizosaccharomyces</taxon>
    </lineage>
</organism>
<name>YJNA_SCHPO</name>
<accession>Q9P7J5</accession>
<proteinExistence type="inferred from homology"/>
<gene>
    <name type="ORF">SPCC24B10.10c</name>
</gene>
<protein>
    <recommendedName>
        <fullName>Uncharacterized AAA domain-containing protein C24B10.10c</fullName>
    </recommendedName>
</protein>
<dbReference type="EMBL" id="CU329672">
    <property type="protein sequence ID" value="CAB76219.1"/>
    <property type="molecule type" value="Genomic_DNA"/>
</dbReference>
<dbReference type="PIR" id="T50417">
    <property type="entry name" value="T50417"/>
</dbReference>
<dbReference type="SMR" id="Q9P7J5"/>
<dbReference type="BioGRID" id="275688">
    <property type="interactions" value="4"/>
</dbReference>
<dbReference type="FunCoup" id="Q9P7J5">
    <property type="interactions" value="344"/>
</dbReference>
<dbReference type="STRING" id="284812.Q9P7J5"/>
<dbReference type="PaxDb" id="4896-SPCC24B10.10c.1"/>
<dbReference type="EnsemblFungi" id="SPCC24B10.10c.1">
    <property type="protein sequence ID" value="SPCC24B10.10c.1:pep"/>
    <property type="gene ID" value="SPCC24B10.10c"/>
</dbReference>
<dbReference type="KEGG" id="spo:2539116"/>
<dbReference type="PomBase" id="SPCC24B10.10c"/>
<dbReference type="VEuPathDB" id="FungiDB:SPCC24B10.10c"/>
<dbReference type="eggNOG" id="KOG0737">
    <property type="taxonomic scope" value="Eukaryota"/>
</dbReference>
<dbReference type="HOGENOM" id="CLU_000688_21_14_1"/>
<dbReference type="InParanoid" id="Q9P7J5"/>
<dbReference type="OMA" id="CRNAAMR"/>
<dbReference type="PhylomeDB" id="Q9P7J5"/>
<dbReference type="Reactome" id="R-SPO-9603798">
    <property type="pathway name" value="Class I peroxisomal membrane protein import"/>
</dbReference>
<dbReference type="PRO" id="PR:Q9P7J5"/>
<dbReference type="Proteomes" id="UP000002485">
    <property type="component" value="Chromosome III"/>
</dbReference>
<dbReference type="GO" id="GO:0005741">
    <property type="term" value="C:mitochondrial outer membrane"/>
    <property type="evidence" value="ECO:0000318"/>
    <property type="project" value="GO_Central"/>
</dbReference>
<dbReference type="GO" id="GO:0005739">
    <property type="term" value="C:mitochondrion"/>
    <property type="evidence" value="ECO:0007005"/>
    <property type="project" value="PomBase"/>
</dbReference>
<dbReference type="GO" id="GO:0005524">
    <property type="term" value="F:ATP binding"/>
    <property type="evidence" value="ECO:0000255"/>
    <property type="project" value="PomBase"/>
</dbReference>
<dbReference type="GO" id="GO:0016887">
    <property type="term" value="F:ATP hydrolysis activity"/>
    <property type="evidence" value="ECO:0000250"/>
    <property type="project" value="PomBase"/>
</dbReference>
<dbReference type="GO" id="GO:0005095">
    <property type="term" value="F:GTPase inhibitor activity"/>
    <property type="evidence" value="ECO:0000269"/>
    <property type="project" value="PomBase"/>
</dbReference>
<dbReference type="GO" id="GO:0140567">
    <property type="term" value="F:membrane protein dislocase activity"/>
    <property type="evidence" value="ECO:0000315"/>
    <property type="project" value="PomBase"/>
</dbReference>
<dbReference type="GO" id="GO:0140570">
    <property type="term" value="P:extraction of mislocalized protein from mitochondrial outer membrane"/>
    <property type="evidence" value="ECO:0000318"/>
    <property type="project" value="GO_Central"/>
</dbReference>
<dbReference type="GO" id="GO:0090258">
    <property type="term" value="P:negative regulation of mitochondrial fission"/>
    <property type="evidence" value="ECO:0000269"/>
    <property type="project" value="PomBase"/>
</dbReference>
<dbReference type="CDD" id="cd19520">
    <property type="entry name" value="RecA-like_ATAD1"/>
    <property type="match status" value="1"/>
</dbReference>
<dbReference type="FunFam" id="3.40.50.300:FF:000538">
    <property type="entry name" value="ATPase family AAA domain-containing protein 1"/>
    <property type="match status" value="1"/>
</dbReference>
<dbReference type="Gene3D" id="1.10.8.60">
    <property type="match status" value="1"/>
</dbReference>
<dbReference type="Gene3D" id="3.40.50.300">
    <property type="entry name" value="P-loop containing nucleotide triphosphate hydrolases"/>
    <property type="match status" value="1"/>
</dbReference>
<dbReference type="InterPro" id="IPR003593">
    <property type="entry name" value="AAA+_ATPase"/>
</dbReference>
<dbReference type="InterPro" id="IPR003959">
    <property type="entry name" value="ATPase_AAA_core"/>
</dbReference>
<dbReference type="InterPro" id="IPR003960">
    <property type="entry name" value="ATPase_AAA_CS"/>
</dbReference>
<dbReference type="InterPro" id="IPR051701">
    <property type="entry name" value="Mito_OM_Translocase_MSP1"/>
</dbReference>
<dbReference type="InterPro" id="IPR027417">
    <property type="entry name" value="P-loop_NTPase"/>
</dbReference>
<dbReference type="PANTHER" id="PTHR45644">
    <property type="entry name" value="AAA ATPASE, PUTATIVE (AFU_ORTHOLOGUE AFUA_2G12920)-RELATED-RELATED"/>
    <property type="match status" value="1"/>
</dbReference>
<dbReference type="PANTHER" id="PTHR45644:SF3">
    <property type="entry name" value="FI08533P-RELATED"/>
    <property type="match status" value="1"/>
</dbReference>
<dbReference type="Pfam" id="PF00004">
    <property type="entry name" value="AAA"/>
    <property type="match status" value="1"/>
</dbReference>
<dbReference type="SMART" id="SM00382">
    <property type="entry name" value="AAA"/>
    <property type="match status" value="1"/>
</dbReference>
<dbReference type="SUPFAM" id="SSF52540">
    <property type="entry name" value="P-loop containing nucleoside triphosphate hydrolases"/>
    <property type="match status" value="1"/>
</dbReference>
<dbReference type="PROSITE" id="PS00674">
    <property type="entry name" value="AAA"/>
    <property type="match status" value="1"/>
</dbReference>
<keyword id="KW-0067">ATP-binding</keyword>
<keyword id="KW-0496">Mitochondrion</keyword>
<keyword id="KW-0547">Nucleotide-binding</keyword>
<keyword id="KW-1185">Reference proteome</keyword>
<comment type="subcellular location">
    <subcellularLocation>
        <location evidence="2">Mitochondrion</location>
    </subcellularLocation>
</comment>
<comment type="similarity">
    <text evidence="3">Belongs to the AAA ATPase family.</text>
</comment>
<evidence type="ECO:0000255" key="1"/>
<evidence type="ECO:0000269" key="2">
    <source>
    </source>
</evidence>
<evidence type="ECO:0000305" key="3"/>